<sequence length="352" mass="40489">MDYQVSSPTYDIDYYTSEPCQKINVKQIAARLLPPLYSLVFIFGFVGNILVVLILINCKRLKSMTDIYLLNLAISDLLFLLTVPFWAHYAAAQWDFGNTMCQLLTGLYFIGFFSGIFFIILLTIDRYLAIVHAVFALKARTVTFGVVTSVITWVVAVFASLPGIIFTRSQREGLHYTCSSHFPYSQYQFWKNFQTLKIVILGLVLPLLVMVICYSGILKTLLRCRNEKKRHRAVRLIFTIMIVYFLFWAPYNIVLLLNTFQEFFGLNNCSSSNRLDQAMQVTETLGMTHCCINPIIYAFVGEKFRNYLLVFFQKHIAKRFCKCCSIFQQEAPERASSVYTRSTGEQEISVGL</sequence>
<feature type="chain" id="PRO_0000069261" description="C-C chemokine receptor type 5">
    <location>
        <begin position="1"/>
        <end position="352"/>
    </location>
</feature>
<feature type="topological domain" description="Extracellular" evidence="3">
    <location>
        <begin position="1"/>
        <end position="30"/>
    </location>
</feature>
<feature type="transmembrane region" description="Helical; Name=1" evidence="3">
    <location>
        <begin position="31"/>
        <end position="58"/>
    </location>
</feature>
<feature type="topological domain" description="Cytoplasmic" evidence="3">
    <location>
        <begin position="59"/>
        <end position="68"/>
    </location>
</feature>
<feature type="transmembrane region" description="Helical; Name=2" evidence="3">
    <location>
        <begin position="69"/>
        <end position="89"/>
    </location>
</feature>
<feature type="topological domain" description="Extracellular" evidence="3">
    <location>
        <begin position="90"/>
        <end position="102"/>
    </location>
</feature>
<feature type="transmembrane region" description="Helical; Name=3" evidence="3">
    <location>
        <begin position="103"/>
        <end position="124"/>
    </location>
</feature>
<feature type="topological domain" description="Cytoplasmic" evidence="3">
    <location>
        <begin position="125"/>
        <end position="141"/>
    </location>
</feature>
<feature type="transmembrane region" description="Helical; Name=4" evidence="3">
    <location>
        <begin position="142"/>
        <end position="166"/>
    </location>
</feature>
<feature type="topological domain" description="Extracellular" evidence="3">
    <location>
        <begin position="167"/>
        <end position="198"/>
    </location>
</feature>
<feature type="transmembrane region" description="Helical; Name=5" evidence="3">
    <location>
        <begin position="199"/>
        <end position="218"/>
    </location>
</feature>
<feature type="topological domain" description="Cytoplasmic" evidence="3">
    <location>
        <begin position="219"/>
        <end position="235"/>
    </location>
</feature>
<feature type="transmembrane region" description="Helical; Name=6" evidence="3">
    <location>
        <begin position="236"/>
        <end position="260"/>
    </location>
</feature>
<feature type="topological domain" description="Extracellular" evidence="3">
    <location>
        <begin position="261"/>
        <end position="277"/>
    </location>
</feature>
<feature type="transmembrane region" description="Helical; Name=7" evidence="3">
    <location>
        <begin position="278"/>
        <end position="301"/>
    </location>
</feature>
<feature type="topological domain" description="Cytoplasmic" evidence="3">
    <location>
        <begin position="302"/>
        <end position="352"/>
    </location>
</feature>
<feature type="modified residue" description="Sulfotyrosine" evidence="1">
    <location>
        <position position="3"/>
    </location>
</feature>
<feature type="modified residue" description="Sulfotyrosine" evidence="3">
    <location>
        <position position="10"/>
    </location>
</feature>
<feature type="modified residue" description="Sulfotyrosine" evidence="3">
    <location>
        <position position="14"/>
    </location>
</feature>
<feature type="modified residue" description="Sulfotyrosine" evidence="3">
    <location>
        <position position="15"/>
    </location>
</feature>
<feature type="modified residue" description="Phosphoserine; by BARK1" evidence="1">
    <location>
        <position position="336"/>
    </location>
</feature>
<feature type="modified residue" description="Phosphoserine; by BARK1" evidence="1">
    <location>
        <position position="337"/>
    </location>
</feature>
<feature type="modified residue" description="Phosphoserine; by BARK1" evidence="1">
    <location>
        <position position="342"/>
    </location>
</feature>
<feature type="modified residue" description="Phosphoserine; by BARK1" evidence="1">
    <location>
        <position position="349"/>
    </location>
</feature>
<feature type="lipid moiety-binding region" description="S-palmitoyl cysteine" evidence="1">
    <location>
        <position position="321"/>
    </location>
</feature>
<feature type="lipid moiety-binding region" description="S-palmitoyl cysteine" evidence="1">
    <location>
        <position position="323"/>
    </location>
</feature>
<feature type="lipid moiety-binding region" description="S-palmitoyl cysteine" evidence="1">
    <location>
        <position position="324"/>
    </location>
</feature>
<feature type="glycosylation site" description="O-linked (GalNAc...) serine" evidence="1">
    <location>
        <position position="6"/>
    </location>
</feature>
<feature type="glycosylation site" description="O-linked (GalNAc...) serine" evidence="1">
    <location>
        <position position="7"/>
    </location>
</feature>
<feature type="disulfide bond" evidence="1">
    <location>
        <begin position="20"/>
        <end position="269"/>
    </location>
</feature>
<feature type="disulfide bond" evidence="4">
    <location>
        <begin position="101"/>
        <end position="178"/>
    </location>
</feature>
<accession>P61755</accession>
<accession>Q71UI8</accession>
<keyword id="KW-1003">Cell membrane</keyword>
<keyword id="KW-1015">Disulfide bond</keyword>
<keyword id="KW-0297">G-protein coupled receptor</keyword>
<keyword id="KW-0325">Glycoprotein</keyword>
<keyword id="KW-0449">Lipoprotein</keyword>
<keyword id="KW-0472">Membrane</keyword>
<keyword id="KW-0564">Palmitate</keyword>
<keyword id="KW-0597">Phosphoprotein</keyword>
<keyword id="KW-0675">Receptor</keyword>
<keyword id="KW-0765">Sulfation</keyword>
<keyword id="KW-0807">Transducer</keyword>
<keyword id="KW-0812">Transmembrane</keyword>
<keyword id="KW-1133">Transmembrane helix</keyword>
<comment type="function">
    <text evidence="1">Receptor for a number of inflammatory CC-chemokines including CCL3/MIP-1-alpha, CCL4/MIP-1-beta and RANTES and subsequently transduces a signal by increasing the intracellular calcium ion level. May play a role in the control of granulocytic lineage proliferation or differentiation. Participates in T-lymphocyte migration to the infection site by acting as a chemotactic receptor.</text>
</comment>
<comment type="subunit">
    <text evidence="1">Interacts with PRAF2. Efficient ligand binding to CCL3/MIP-1alpha and CCL4/MIP-1beta requires sulfation, O-glycosylation and sialic acid modifications. Glycosylation on Ser-6 is required for efficient binding of CCL4. Interacts with GRK2. Interacts with ARRB1 and ARRB2. Interacts with CNIH4. Interacts with S100A4; this interaction stimulates T-lymphocyte chemotaxis.</text>
</comment>
<comment type="subcellular location">
    <subcellularLocation>
        <location evidence="2">Cell membrane</location>
        <topology evidence="2">Multi-pass membrane protein</topology>
    </subcellularLocation>
</comment>
<comment type="PTM">
    <text evidence="1">Sulfated on at least 2 of the N-terminal tyrosines. Sulfation is required for efficient binding of the chemokines, CCL3 and CCL4 (By similarity).</text>
</comment>
<comment type="PTM">
    <text evidence="1">Palmitoylation in the C-terminal is important for cell surface expression.</text>
</comment>
<comment type="PTM">
    <text evidence="1">Phosphorylation on serine residues in the C-terminal is stimulated by binding CC chemokines especially by APO-RANTES.</text>
</comment>
<comment type="PTM">
    <text evidence="1">O-glycosylated, but not N-glycosylated. Ser-6 appears to be the major site even if Ser-7 may be also O-glycosylated. Also sialylated glycans present which contribute to chemokine binding. Thr-16 and Ser-17 may also be glycosylated and, if so, with small moieties such as a T-antigen.</text>
</comment>
<comment type="similarity">
    <text evidence="4">Belongs to the G-protein coupled receptor 1 family.</text>
</comment>
<evidence type="ECO:0000250" key="1">
    <source>
        <dbReference type="UniProtKB" id="P51681"/>
    </source>
</evidence>
<evidence type="ECO:0000250" key="2">
    <source>
        <dbReference type="UniProtKB" id="Q9XT76"/>
    </source>
</evidence>
<evidence type="ECO:0000255" key="3"/>
<evidence type="ECO:0000255" key="4">
    <source>
        <dbReference type="PROSITE-ProRule" id="PRU00521"/>
    </source>
</evidence>
<organism>
    <name type="scientific">Lophocebus aterrimus</name>
    <name type="common">Black crested mangabey</name>
    <name type="synonym">Cercocebus aterrimus</name>
    <dbReference type="NCBI Taxonomy" id="75566"/>
    <lineage>
        <taxon>Eukaryota</taxon>
        <taxon>Metazoa</taxon>
        <taxon>Chordata</taxon>
        <taxon>Craniata</taxon>
        <taxon>Vertebrata</taxon>
        <taxon>Euteleostomi</taxon>
        <taxon>Mammalia</taxon>
        <taxon>Eutheria</taxon>
        <taxon>Euarchontoglires</taxon>
        <taxon>Primates</taxon>
        <taxon>Haplorrhini</taxon>
        <taxon>Catarrhini</taxon>
        <taxon>Cercopithecidae</taxon>
        <taxon>Cercopithecinae</taxon>
        <taxon>Lophocebus</taxon>
    </lineage>
</organism>
<gene>
    <name type="primary">CCR5</name>
    <name type="synonym">CMKBR5</name>
</gene>
<dbReference type="EMBL" id="AF081578">
    <property type="protein sequence ID" value="AAD45496.1"/>
    <property type="molecule type" value="Genomic_DNA"/>
</dbReference>
<dbReference type="EMBL" id="AF177897">
    <property type="protein sequence ID" value="AAK43380.1"/>
    <property type="molecule type" value="Genomic_DNA"/>
</dbReference>
<dbReference type="SMR" id="P61755"/>
<dbReference type="GlyCosmos" id="P61755">
    <property type="glycosylation" value="2 sites, No reported glycans"/>
</dbReference>
<dbReference type="GO" id="GO:0005737">
    <property type="term" value="C:cytoplasm"/>
    <property type="evidence" value="ECO:0007669"/>
    <property type="project" value="TreeGrafter"/>
</dbReference>
<dbReference type="GO" id="GO:0009897">
    <property type="term" value="C:external side of plasma membrane"/>
    <property type="evidence" value="ECO:0000250"/>
    <property type="project" value="UniProtKB"/>
</dbReference>
<dbReference type="GO" id="GO:0016493">
    <property type="term" value="F:C-C chemokine receptor activity"/>
    <property type="evidence" value="ECO:0000250"/>
    <property type="project" value="UniProtKB"/>
</dbReference>
<dbReference type="GO" id="GO:0071791">
    <property type="term" value="F:chemokine (C-C motif) ligand 5 binding"/>
    <property type="evidence" value="ECO:0007669"/>
    <property type="project" value="TreeGrafter"/>
</dbReference>
<dbReference type="GO" id="GO:0019722">
    <property type="term" value="P:calcium-mediated signaling"/>
    <property type="evidence" value="ECO:0007669"/>
    <property type="project" value="TreeGrafter"/>
</dbReference>
<dbReference type="GO" id="GO:0060326">
    <property type="term" value="P:cell chemotaxis"/>
    <property type="evidence" value="ECO:0007669"/>
    <property type="project" value="TreeGrafter"/>
</dbReference>
<dbReference type="GO" id="GO:0006955">
    <property type="term" value="P:immune response"/>
    <property type="evidence" value="ECO:0007669"/>
    <property type="project" value="InterPro"/>
</dbReference>
<dbReference type="GO" id="GO:0006954">
    <property type="term" value="P:inflammatory response"/>
    <property type="evidence" value="ECO:0007669"/>
    <property type="project" value="InterPro"/>
</dbReference>
<dbReference type="GO" id="GO:0007204">
    <property type="term" value="P:positive regulation of cytosolic calcium ion concentration"/>
    <property type="evidence" value="ECO:0007669"/>
    <property type="project" value="TreeGrafter"/>
</dbReference>
<dbReference type="CDD" id="cd15184">
    <property type="entry name" value="7tmA_CCR5_CCR2"/>
    <property type="match status" value="1"/>
</dbReference>
<dbReference type="FunFam" id="1.20.1070.10:FF:000026">
    <property type="entry name" value="C-C chemokine receptor type 5"/>
    <property type="match status" value="1"/>
</dbReference>
<dbReference type="Gene3D" id="1.20.1070.10">
    <property type="entry name" value="Rhodopsin 7-helix transmembrane proteins"/>
    <property type="match status" value="1"/>
</dbReference>
<dbReference type="InterPro" id="IPR050119">
    <property type="entry name" value="CCR1-9-like"/>
</dbReference>
<dbReference type="InterPro" id="IPR002240">
    <property type="entry name" value="Chemokine_CCR5"/>
</dbReference>
<dbReference type="InterPro" id="IPR000355">
    <property type="entry name" value="Chemokine_rcpt"/>
</dbReference>
<dbReference type="InterPro" id="IPR000276">
    <property type="entry name" value="GPCR_Rhodpsn"/>
</dbReference>
<dbReference type="InterPro" id="IPR017452">
    <property type="entry name" value="GPCR_Rhodpsn_7TM"/>
</dbReference>
<dbReference type="PANTHER" id="PTHR10489:SF686">
    <property type="entry name" value="C-C CHEMOKINE RECEPTOR TYPE 5"/>
    <property type="match status" value="1"/>
</dbReference>
<dbReference type="PANTHER" id="PTHR10489">
    <property type="entry name" value="CELL ADHESION MOLECULE"/>
    <property type="match status" value="1"/>
</dbReference>
<dbReference type="Pfam" id="PF00001">
    <property type="entry name" value="7tm_1"/>
    <property type="match status" value="1"/>
</dbReference>
<dbReference type="PRINTS" id="PR00657">
    <property type="entry name" value="CCCHEMOKINER"/>
</dbReference>
<dbReference type="PRINTS" id="PR01110">
    <property type="entry name" value="CHEMOKINER5"/>
</dbReference>
<dbReference type="PRINTS" id="PR00237">
    <property type="entry name" value="GPCRRHODOPSN"/>
</dbReference>
<dbReference type="SUPFAM" id="SSF81321">
    <property type="entry name" value="Family A G protein-coupled receptor-like"/>
    <property type="match status" value="1"/>
</dbReference>
<dbReference type="PROSITE" id="PS00237">
    <property type="entry name" value="G_PROTEIN_RECEP_F1_1"/>
    <property type="match status" value="1"/>
</dbReference>
<dbReference type="PROSITE" id="PS50262">
    <property type="entry name" value="G_PROTEIN_RECEP_F1_2"/>
    <property type="match status" value="1"/>
</dbReference>
<protein>
    <recommendedName>
        <fullName>C-C chemokine receptor type 5</fullName>
        <shortName>C-C CKR-5</shortName>
        <shortName>CC-CKR-5</shortName>
        <shortName>CCR-5</shortName>
        <shortName>CCR5</shortName>
    </recommendedName>
    <cdAntigenName>CD195</cdAntigenName>
</protein>
<reference key="1">
    <citation type="journal article" date="1999" name="AIDS Res. Hum. Retroviruses">
        <title>Mutations in CCR5-coding sequences are not associated with SIV carrier status in African nonhuman primates.</title>
        <authorList>
            <person name="Mueller-Trutwin M.-C."/>
            <person name="Corbet S."/>
            <person name="Hansen J."/>
            <person name="Georges-Courbot M.-C."/>
            <person name="Diop O."/>
            <person name="Rigoulet J."/>
            <person name="Barre-Sinoussi F."/>
            <person name="Fomsgaard A."/>
        </authorList>
    </citation>
    <scope>NUCLEOTIDE SEQUENCE [GENOMIC DNA]</scope>
</reference>
<reference key="2">
    <citation type="journal article" date="1999" name="Mol. Biol. Evol.">
        <title>Sequence evolution of the CCR5 chemokine receptor gene in primates.</title>
        <authorList>
            <person name="Zhang Y.-W."/>
            <person name="Ryder O.A."/>
            <person name="Zhang Y.-P."/>
        </authorList>
    </citation>
    <scope>NUCLEOTIDE SEQUENCE [GENOMIC DNA]</scope>
</reference>
<name>CCR5_LOPAT</name>
<proteinExistence type="inferred from homology"/>